<organism>
    <name type="scientific">Buchnera aphidicola subsp. Schizaphis graminum (strain Sg)</name>
    <dbReference type="NCBI Taxonomy" id="198804"/>
    <lineage>
        <taxon>Bacteria</taxon>
        <taxon>Pseudomonadati</taxon>
        <taxon>Pseudomonadota</taxon>
        <taxon>Gammaproteobacteria</taxon>
        <taxon>Enterobacterales</taxon>
        <taxon>Erwiniaceae</taxon>
        <taxon>Buchnera</taxon>
    </lineage>
</organism>
<comment type="function">
    <text evidence="1">Catalyzes the reversible transfer of the terminal phosphate group between ATP and AMP. Plays an important role in cellular energy homeostasis and in adenine nucleotide metabolism.</text>
</comment>
<comment type="catalytic activity">
    <reaction evidence="1">
        <text>AMP + ATP = 2 ADP</text>
        <dbReference type="Rhea" id="RHEA:12973"/>
        <dbReference type="ChEBI" id="CHEBI:30616"/>
        <dbReference type="ChEBI" id="CHEBI:456215"/>
        <dbReference type="ChEBI" id="CHEBI:456216"/>
        <dbReference type="EC" id="2.7.4.3"/>
    </reaction>
</comment>
<comment type="pathway">
    <text evidence="1">Purine metabolism; AMP biosynthesis via salvage pathway; AMP from ADP: step 1/1.</text>
</comment>
<comment type="subunit">
    <text evidence="1">Monomer.</text>
</comment>
<comment type="subcellular location">
    <subcellularLocation>
        <location evidence="1">Cytoplasm</location>
    </subcellularLocation>
</comment>
<comment type="domain">
    <text evidence="1">Consists of three domains, a large central CORE domain and two small peripheral domains, NMPbind and LID, which undergo movements during catalysis. The LID domain closes over the site of phosphoryl transfer upon ATP binding. Assembling and dissambling the active center during each catalytic cycle provides an effective means to prevent ATP hydrolysis.</text>
</comment>
<comment type="similarity">
    <text evidence="1">Belongs to the adenylate kinase family.</text>
</comment>
<accession>Q8K980</accession>
<proteinExistence type="inferred from homology"/>
<name>KAD_BUCAP</name>
<gene>
    <name evidence="1" type="primary">adk</name>
    <name type="ordered locus">BUsg_469</name>
</gene>
<evidence type="ECO:0000255" key="1">
    <source>
        <dbReference type="HAMAP-Rule" id="MF_00235"/>
    </source>
</evidence>
<reference key="1">
    <citation type="journal article" date="2002" name="Science">
        <title>50 million years of genomic stasis in endosymbiotic bacteria.</title>
        <authorList>
            <person name="Tamas I."/>
            <person name="Klasson L."/>
            <person name="Canbaeck B."/>
            <person name="Naeslund A.K."/>
            <person name="Eriksson A.-S."/>
            <person name="Wernegreen J.J."/>
            <person name="Sandstroem J.P."/>
            <person name="Moran N.A."/>
            <person name="Andersson S.G.E."/>
        </authorList>
    </citation>
    <scope>NUCLEOTIDE SEQUENCE [LARGE SCALE GENOMIC DNA]</scope>
    <source>
        <strain>Sg</strain>
    </source>
</reference>
<protein>
    <recommendedName>
        <fullName evidence="1">Adenylate kinase</fullName>
        <shortName evidence="1">AK</shortName>
        <ecNumber evidence="1">2.7.4.3</ecNumber>
    </recommendedName>
    <alternativeName>
        <fullName evidence="1">ATP-AMP transphosphorylase</fullName>
    </alternativeName>
    <alternativeName>
        <fullName evidence="1">ATP:AMP phosphotransferase</fullName>
    </alternativeName>
    <alternativeName>
        <fullName evidence="1">Adenylate monophosphate kinase</fullName>
    </alternativeName>
</protein>
<keyword id="KW-0067">ATP-binding</keyword>
<keyword id="KW-0963">Cytoplasm</keyword>
<keyword id="KW-0418">Kinase</keyword>
<keyword id="KW-0545">Nucleotide biosynthesis</keyword>
<keyword id="KW-0547">Nucleotide-binding</keyword>
<keyword id="KW-0808">Transferase</keyword>
<feature type="chain" id="PRO_0000158744" description="Adenylate kinase">
    <location>
        <begin position="1"/>
        <end position="214"/>
    </location>
</feature>
<feature type="region of interest" description="NMP" evidence="1">
    <location>
        <begin position="30"/>
        <end position="59"/>
    </location>
</feature>
<feature type="region of interest" description="LID">
    <location>
        <begin position="122"/>
        <end position="159"/>
    </location>
</feature>
<feature type="binding site" evidence="1">
    <location>
        <begin position="10"/>
        <end position="15"/>
    </location>
    <ligand>
        <name>ATP</name>
        <dbReference type="ChEBI" id="CHEBI:30616"/>
    </ligand>
</feature>
<feature type="binding site" evidence="1">
    <location>
        <position position="31"/>
    </location>
    <ligand>
        <name>AMP</name>
        <dbReference type="ChEBI" id="CHEBI:456215"/>
    </ligand>
</feature>
<feature type="binding site" evidence="1">
    <location>
        <position position="36"/>
    </location>
    <ligand>
        <name>AMP</name>
        <dbReference type="ChEBI" id="CHEBI:456215"/>
    </ligand>
</feature>
<feature type="binding site" evidence="1">
    <location>
        <begin position="57"/>
        <end position="59"/>
    </location>
    <ligand>
        <name>AMP</name>
        <dbReference type="ChEBI" id="CHEBI:456215"/>
    </ligand>
</feature>
<feature type="binding site" evidence="1">
    <location>
        <begin position="85"/>
        <end position="88"/>
    </location>
    <ligand>
        <name>AMP</name>
        <dbReference type="ChEBI" id="CHEBI:456215"/>
    </ligand>
</feature>
<feature type="binding site" evidence="1">
    <location>
        <position position="92"/>
    </location>
    <ligand>
        <name>AMP</name>
        <dbReference type="ChEBI" id="CHEBI:456215"/>
    </ligand>
</feature>
<feature type="binding site" evidence="1">
    <location>
        <position position="123"/>
    </location>
    <ligand>
        <name>ATP</name>
        <dbReference type="ChEBI" id="CHEBI:30616"/>
    </ligand>
</feature>
<feature type="binding site" evidence="1">
    <location>
        <begin position="132"/>
        <end position="133"/>
    </location>
    <ligand>
        <name>ATP</name>
        <dbReference type="ChEBI" id="CHEBI:30616"/>
    </ligand>
</feature>
<feature type="binding site" evidence="1">
    <location>
        <position position="156"/>
    </location>
    <ligand>
        <name>AMP</name>
        <dbReference type="ChEBI" id="CHEBI:456215"/>
    </ligand>
</feature>
<feature type="binding site" evidence="1">
    <location>
        <position position="167"/>
    </location>
    <ligand>
        <name>AMP</name>
        <dbReference type="ChEBI" id="CHEBI:456215"/>
    </ligand>
</feature>
<feature type="binding site" evidence="1">
    <location>
        <position position="200"/>
    </location>
    <ligand>
        <name>ATP</name>
        <dbReference type="ChEBI" id="CHEBI:30616"/>
    </ligand>
</feature>
<dbReference type="EC" id="2.7.4.3" evidence="1"/>
<dbReference type="EMBL" id="AE013218">
    <property type="protein sequence ID" value="AAM68012.1"/>
    <property type="molecule type" value="Genomic_DNA"/>
</dbReference>
<dbReference type="RefSeq" id="WP_011053979.1">
    <property type="nucleotide sequence ID" value="NC_004061.1"/>
</dbReference>
<dbReference type="SMR" id="Q8K980"/>
<dbReference type="STRING" id="198804.BUsg_469"/>
<dbReference type="GeneID" id="93003940"/>
<dbReference type="KEGG" id="bas:BUsg_469"/>
<dbReference type="eggNOG" id="COG0563">
    <property type="taxonomic scope" value="Bacteria"/>
</dbReference>
<dbReference type="HOGENOM" id="CLU_032354_1_2_6"/>
<dbReference type="UniPathway" id="UPA00588">
    <property type="reaction ID" value="UER00649"/>
</dbReference>
<dbReference type="Proteomes" id="UP000000416">
    <property type="component" value="Chromosome"/>
</dbReference>
<dbReference type="GO" id="GO:0005737">
    <property type="term" value="C:cytoplasm"/>
    <property type="evidence" value="ECO:0007669"/>
    <property type="project" value="UniProtKB-SubCell"/>
</dbReference>
<dbReference type="GO" id="GO:0004017">
    <property type="term" value="F:adenylate kinase activity"/>
    <property type="evidence" value="ECO:0007669"/>
    <property type="project" value="UniProtKB-UniRule"/>
</dbReference>
<dbReference type="GO" id="GO:0005524">
    <property type="term" value="F:ATP binding"/>
    <property type="evidence" value="ECO:0007669"/>
    <property type="project" value="UniProtKB-UniRule"/>
</dbReference>
<dbReference type="GO" id="GO:0044209">
    <property type="term" value="P:AMP salvage"/>
    <property type="evidence" value="ECO:0007669"/>
    <property type="project" value="UniProtKB-UniRule"/>
</dbReference>
<dbReference type="CDD" id="cd01428">
    <property type="entry name" value="ADK"/>
    <property type="match status" value="1"/>
</dbReference>
<dbReference type="FunFam" id="3.40.50.300:FF:000106">
    <property type="entry name" value="Adenylate kinase mitochondrial"/>
    <property type="match status" value="1"/>
</dbReference>
<dbReference type="Gene3D" id="3.40.50.300">
    <property type="entry name" value="P-loop containing nucleotide triphosphate hydrolases"/>
    <property type="match status" value="1"/>
</dbReference>
<dbReference type="HAMAP" id="MF_00235">
    <property type="entry name" value="Adenylate_kinase_Adk"/>
    <property type="match status" value="1"/>
</dbReference>
<dbReference type="InterPro" id="IPR006259">
    <property type="entry name" value="Adenyl_kin_sub"/>
</dbReference>
<dbReference type="InterPro" id="IPR000850">
    <property type="entry name" value="Adenylat/UMP-CMP_kin"/>
</dbReference>
<dbReference type="InterPro" id="IPR033690">
    <property type="entry name" value="Adenylat_kinase_CS"/>
</dbReference>
<dbReference type="InterPro" id="IPR007862">
    <property type="entry name" value="Adenylate_kinase_lid-dom"/>
</dbReference>
<dbReference type="InterPro" id="IPR027417">
    <property type="entry name" value="P-loop_NTPase"/>
</dbReference>
<dbReference type="NCBIfam" id="TIGR01351">
    <property type="entry name" value="adk"/>
    <property type="match status" value="1"/>
</dbReference>
<dbReference type="NCBIfam" id="NF001379">
    <property type="entry name" value="PRK00279.1-1"/>
    <property type="match status" value="1"/>
</dbReference>
<dbReference type="PANTHER" id="PTHR23359">
    <property type="entry name" value="NUCLEOTIDE KINASE"/>
    <property type="match status" value="1"/>
</dbReference>
<dbReference type="Pfam" id="PF00406">
    <property type="entry name" value="ADK"/>
    <property type="match status" value="1"/>
</dbReference>
<dbReference type="Pfam" id="PF05191">
    <property type="entry name" value="ADK_lid"/>
    <property type="match status" value="1"/>
</dbReference>
<dbReference type="PRINTS" id="PR00094">
    <property type="entry name" value="ADENYLTKNASE"/>
</dbReference>
<dbReference type="SUPFAM" id="SSF52540">
    <property type="entry name" value="P-loop containing nucleoside triphosphate hydrolases"/>
    <property type="match status" value="1"/>
</dbReference>
<dbReference type="PROSITE" id="PS00113">
    <property type="entry name" value="ADENYLATE_KINASE"/>
    <property type="match status" value="1"/>
</dbReference>
<sequence>MRIILLGAPGTGKGTQAKLITENYNIPKISTGDILRENIQKKNTIGKKIHNILKNGELVSNRIVCNLIGERIQKKDCIHGFLLDGFPRTQKQAEYISNLKIKIDYVLELIVPYELILKRICGRRVHTPSGRIYNINYNPPREEGKDDLTQEKLTIREDDTIEIVKKRLENYEKNSFLLNKYYLREKKLKKLQYFKIDGKQSIYKIQREIKMMLK</sequence>